<dbReference type="EC" id="2.7.7.-" evidence="2"/>
<dbReference type="EC" id="2.8.1.-" evidence="2"/>
<dbReference type="EMBL" id="CR380955">
    <property type="protein sequence ID" value="CAG60246.1"/>
    <property type="molecule type" value="Genomic_DNA"/>
</dbReference>
<dbReference type="RefSeq" id="XP_447309.1">
    <property type="nucleotide sequence ID" value="XM_447309.1"/>
</dbReference>
<dbReference type="SMR" id="Q6FR35"/>
<dbReference type="FunCoup" id="Q6FR35">
    <property type="interactions" value="907"/>
</dbReference>
<dbReference type="STRING" id="284593.Q6FR35"/>
<dbReference type="EnsemblFungi" id="CAGL0I01254g-T">
    <property type="protein sequence ID" value="CAGL0I01254g-T-p1"/>
    <property type="gene ID" value="CAGL0I01254g"/>
</dbReference>
<dbReference type="KEGG" id="cgr:2889117"/>
<dbReference type="CGD" id="CAL0130400">
    <property type="gene designation" value="CAGL0I01254g"/>
</dbReference>
<dbReference type="VEuPathDB" id="FungiDB:B1J91_I01254g"/>
<dbReference type="VEuPathDB" id="FungiDB:CAGL0I01254g"/>
<dbReference type="eggNOG" id="KOG2017">
    <property type="taxonomic scope" value="Eukaryota"/>
</dbReference>
<dbReference type="HOGENOM" id="CLU_013325_1_2_1"/>
<dbReference type="InParanoid" id="Q6FR35"/>
<dbReference type="OMA" id="IPDVGMD"/>
<dbReference type="UniPathway" id="UPA00988"/>
<dbReference type="Proteomes" id="UP000002428">
    <property type="component" value="Chromosome I"/>
</dbReference>
<dbReference type="GO" id="GO:0005829">
    <property type="term" value="C:cytosol"/>
    <property type="evidence" value="ECO:0007669"/>
    <property type="project" value="InterPro"/>
</dbReference>
<dbReference type="GO" id="GO:0070733">
    <property type="term" value="F:AMPylase activity"/>
    <property type="evidence" value="ECO:0007669"/>
    <property type="project" value="EnsemblFungi"/>
</dbReference>
<dbReference type="GO" id="GO:0005524">
    <property type="term" value="F:ATP binding"/>
    <property type="evidence" value="ECO:0007669"/>
    <property type="project" value="UniProtKB-KW"/>
</dbReference>
<dbReference type="GO" id="GO:0042802">
    <property type="term" value="F:identical protein binding"/>
    <property type="evidence" value="ECO:0007669"/>
    <property type="project" value="EnsemblFungi"/>
</dbReference>
<dbReference type="GO" id="GO:0046872">
    <property type="term" value="F:metal ion binding"/>
    <property type="evidence" value="ECO:0007669"/>
    <property type="project" value="UniProtKB-KW"/>
</dbReference>
<dbReference type="GO" id="GO:0004792">
    <property type="term" value="F:thiosulfate-cyanide sulfurtransferase activity"/>
    <property type="evidence" value="ECO:0007669"/>
    <property type="project" value="EnsemblFungi"/>
</dbReference>
<dbReference type="GO" id="GO:0042292">
    <property type="term" value="F:URM1 activating enzyme activity"/>
    <property type="evidence" value="ECO:0007669"/>
    <property type="project" value="EnsemblFungi"/>
</dbReference>
<dbReference type="GO" id="GO:0007114">
    <property type="term" value="P:cell budding"/>
    <property type="evidence" value="ECO:0007669"/>
    <property type="project" value="EnsemblFungi"/>
</dbReference>
<dbReference type="GO" id="GO:0034599">
    <property type="term" value="P:cellular response to oxidative stress"/>
    <property type="evidence" value="ECO:0007669"/>
    <property type="project" value="EnsemblFungi"/>
</dbReference>
<dbReference type="GO" id="GO:0001403">
    <property type="term" value="P:invasive growth in response to glucose limitation"/>
    <property type="evidence" value="ECO:0007669"/>
    <property type="project" value="EnsemblFungi"/>
</dbReference>
<dbReference type="GO" id="GO:0032447">
    <property type="term" value="P:protein urmylation"/>
    <property type="evidence" value="ECO:0007669"/>
    <property type="project" value="UniProtKB-UniRule"/>
</dbReference>
<dbReference type="GO" id="GO:2000220">
    <property type="term" value="P:regulation of pseudohyphal growth"/>
    <property type="evidence" value="ECO:0007669"/>
    <property type="project" value="EnsemblFungi"/>
</dbReference>
<dbReference type="GO" id="GO:0002143">
    <property type="term" value="P:tRNA wobble position uridine thiolation"/>
    <property type="evidence" value="ECO:0007669"/>
    <property type="project" value="EnsemblFungi"/>
</dbReference>
<dbReference type="CDD" id="cd00757">
    <property type="entry name" value="ThiF_MoeB_HesA_family"/>
    <property type="match status" value="1"/>
</dbReference>
<dbReference type="FunFam" id="3.40.250.10:FF:000014">
    <property type="entry name" value="Adenylyltransferase and sulfurtransferase MOCS3"/>
    <property type="match status" value="1"/>
</dbReference>
<dbReference type="FunFam" id="3.40.50.720:FF:000033">
    <property type="entry name" value="Adenylyltransferase and sulfurtransferase MOCS3"/>
    <property type="match status" value="1"/>
</dbReference>
<dbReference type="Gene3D" id="3.40.50.720">
    <property type="entry name" value="NAD(P)-binding Rossmann-like Domain"/>
    <property type="match status" value="1"/>
</dbReference>
<dbReference type="Gene3D" id="3.40.250.10">
    <property type="entry name" value="Rhodanese-like domain"/>
    <property type="match status" value="1"/>
</dbReference>
<dbReference type="HAMAP" id="MF_03049">
    <property type="entry name" value="MOCS3_Uba4"/>
    <property type="match status" value="1"/>
</dbReference>
<dbReference type="InterPro" id="IPR028885">
    <property type="entry name" value="MOCS3/Uba4"/>
</dbReference>
<dbReference type="InterPro" id="IPR001763">
    <property type="entry name" value="Rhodanese-like_dom"/>
</dbReference>
<dbReference type="InterPro" id="IPR036873">
    <property type="entry name" value="Rhodanese-like_dom_sf"/>
</dbReference>
<dbReference type="InterPro" id="IPR045886">
    <property type="entry name" value="ThiF/MoeB/HesA"/>
</dbReference>
<dbReference type="InterPro" id="IPR000594">
    <property type="entry name" value="ThiF_NAD_FAD-bd"/>
</dbReference>
<dbReference type="InterPro" id="IPR035985">
    <property type="entry name" value="Ubiquitin-activating_enz"/>
</dbReference>
<dbReference type="PANTHER" id="PTHR10953:SF102">
    <property type="entry name" value="ADENYLYLTRANSFERASE AND SULFURTRANSFERASE MOCS3"/>
    <property type="match status" value="1"/>
</dbReference>
<dbReference type="PANTHER" id="PTHR10953">
    <property type="entry name" value="UBIQUITIN-ACTIVATING ENZYME E1"/>
    <property type="match status" value="1"/>
</dbReference>
<dbReference type="Pfam" id="PF00581">
    <property type="entry name" value="Rhodanese"/>
    <property type="match status" value="1"/>
</dbReference>
<dbReference type="Pfam" id="PF00899">
    <property type="entry name" value="ThiF"/>
    <property type="match status" value="1"/>
</dbReference>
<dbReference type="SMART" id="SM00450">
    <property type="entry name" value="RHOD"/>
    <property type="match status" value="1"/>
</dbReference>
<dbReference type="SUPFAM" id="SSF69572">
    <property type="entry name" value="Activating enzymes of the ubiquitin-like proteins"/>
    <property type="match status" value="1"/>
</dbReference>
<dbReference type="PROSITE" id="PS50206">
    <property type="entry name" value="RHODANESE_3"/>
    <property type="match status" value="1"/>
</dbReference>
<comment type="function">
    <text evidence="2">Plays a central role in 2-thiolation of mcm(5)S(2)U at tRNA wobble positions of cytosolic tRNA(Lys), tRNA(Glu) and tRNA(Gln). Acts by mediating the C-terminal thiocarboxylation of sulfur carrier URM1. Its N-terminus first activates URM1 as acyl-adenylate (-COAMP), then the persulfide sulfur on the catalytic cysteine is transferred to URM1 to form thiocarboxylation (-COSH) of its C-terminus. The reaction probably involves hydrogen sulfide that is generated from the persulfide intermediate and that acts as a nucleophile towards URM1. Subsequently, a transient disulfide bond is formed. Does not use thiosulfate as sulfur donor; NFS1 probably acting as a sulfur donor for thiocarboxylation reactions. Prior mcm(5) tRNA modification by the elongator complex is required for 2-thiolation. May also be involved in protein urmylation.</text>
</comment>
<comment type="cofactor">
    <cofactor evidence="2">
        <name>Zn(2+)</name>
        <dbReference type="ChEBI" id="CHEBI:29105"/>
    </cofactor>
    <text evidence="2">Binds 1 zinc ion per subunit.</text>
</comment>
<comment type="pathway">
    <text evidence="2">tRNA modification; 5-methoxycarbonylmethyl-2-thiouridine-tRNA biosynthesis.</text>
</comment>
<comment type="subcellular location">
    <subcellularLocation>
        <location evidence="1">Cytoplasm</location>
        <location evidence="1">Cytosol</location>
    </subcellularLocation>
</comment>
<comment type="similarity">
    <text evidence="2">In the N-terminal section; belongs to the HesA/MoeB/ThiF family. UBA4 subfamily.</text>
</comment>
<name>UBA4_CANGA</name>
<keyword id="KW-0067">ATP-binding</keyword>
<keyword id="KW-0963">Cytoplasm</keyword>
<keyword id="KW-0479">Metal-binding</keyword>
<keyword id="KW-0511">Multifunctional enzyme</keyword>
<keyword id="KW-0547">Nucleotide-binding</keyword>
<keyword id="KW-0548">Nucleotidyltransferase</keyword>
<keyword id="KW-1185">Reference proteome</keyword>
<keyword id="KW-0808">Transferase</keyword>
<keyword id="KW-0819">tRNA processing</keyword>
<keyword id="KW-0833">Ubl conjugation pathway</keyword>
<keyword id="KW-0862">Zinc</keyword>
<evidence type="ECO:0000250" key="1">
    <source>
        <dbReference type="UniProtKB" id="P38820"/>
    </source>
</evidence>
<evidence type="ECO:0000255" key="2">
    <source>
        <dbReference type="HAMAP-Rule" id="MF_03049"/>
    </source>
</evidence>
<sequence>MTDQDLLAQIELLKKENAQLKEKLKSQDDEQLSLEEYSRYGRQMIVEGTGGVVGQLRLKKAKVLVVGAGGLGSPSLPYLVGAGVGTIGIVDNDIVDTSNLHRQTIHNTAKVGMLKCESAKQVLKDLNPHVNINTYPVRLGPENAFSIFADYDIVMDCTDTPLTRYLISDVAVNLGKTVVSASGLGTEGQLTILNFNNIGPCYRCFYPVSPNPYAVSSCQEGGVIGPCIGLVGTMMAVETLKIIMGVYNNENFEPFLLSYSGFPIQSLRRFKMRGRQSKCQTCGDAPVITKEAIESGIIDYNIFCGSRNYNVCAEGERLTAKEFDENYGPEFSGNNKVLLDVRPSHHFDISHFNNAVNIPLKELRDMDGDISTLQSRIPNINKNSEVVVLCRYGNDSQLATRMLKDEFGITNVKDVAGGFFKYIDDVDQSIPKY</sequence>
<proteinExistence type="inferred from homology"/>
<organism>
    <name type="scientific">Candida glabrata (strain ATCC 2001 / BCRC 20586 / JCM 3761 / NBRC 0622 / NRRL Y-65 / CBS 138)</name>
    <name type="common">Yeast</name>
    <name type="synonym">Nakaseomyces glabratus</name>
    <dbReference type="NCBI Taxonomy" id="284593"/>
    <lineage>
        <taxon>Eukaryota</taxon>
        <taxon>Fungi</taxon>
        <taxon>Dikarya</taxon>
        <taxon>Ascomycota</taxon>
        <taxon>Saccharomycotina</taxon>
        <taxon>Saccharomycetes</taxon>
        <taxon>Saccharomycetales</taxon>
        <taxon>Saccharomycetaceae</taxon>
        <taxon>Nakaseomyces</taxon>
    </lineage>
</organism>
<protein>
    <recommendedName>
        <fullName evidence="2">Adenylyltransferase and sulfurtransferase UBA4</fullName>
    </recommendedName>
    <alternativeName>
        <fullName evidence="2">Ubiquitin-like protein activator 4</fullName>
    </alternativeName>
    <domain>
        <recommendedName>
            <fullName evidence="2">Adenylyltransferase UBA4</fullName>
            <ecNumber evidence="2">2.7.7.-</ecNumber>
        </recommendedName>
    </domain>
    <domain>
        <recommendedName>
            <fullName evidence="2">Sulfurtransferase UBA4</fullName>
            <ecNumber evidence="2">2.8.1.-</ecNumber>
        </recommendedName>
    </domain>
</protein>
<gene>
    <name evidence="2" type="primary">UBA4</name>
    <name type="ordered locus">CAGL0I01254g</name>
</gene>
<accession>Q6FR35</accession>
<feature type="chain" id="PRO_0000369224" description="Adenylyltransferase and sulfurtransferase UBA4">
    <location>
        <begin position="1"/>
        <end position="433"/>
    </location>
</feature>
<feature type="domain" description="Rhodanese" evidence="2">
    <location>
        <begin position="332"/>
        <end position="431"/>
    </location>
</feature>
<feature type="active site" description="Glycyl thioester intermediate; for adenylyltransferase activity" evidence="2">
    <location>
        <position position="218"/>
    </location>
</feature>
<feature type="active site" description="Cysteine persulfide intermediate; for sulfurtransferase activity" evidence="2">
    <location>
        <position position="390"/>
    </location>
</feature>
<feature type="binding site" evidence="2">
    <location>
        <position position="70"/>
    </location>
    <ligand>
        <name>ATP</name>
        <dbReference type="ChEBI" id="CHEBI:30616"/>
    </ligand>
</feature>
<feature type="binding site" evidence="2">
    <location>
        <position position="91"/>
    </location>
    <ligand>
        <name>ATP</name>
        <dbReference type="ChEBI" id="CHEBI:30616"/>
    </ligand>
</feature>
<feature type="binding site" evidence="2">
    <location>
        <begin position="98"/>
        <end position="102"/>
    </location>
    <ligand>
        <name>ATP</name>
        <dbReference type="ChEBI" id="CHEBI:30616"/>
    </ligand>
</feature>
<feature type="binding site" evidence="2">
    <location>
        <position position="115"/>
    </location>
    <ligand>
        <name>ATP</name>
        <dbReference type="ChEBI" id="CHEBI:30616"/>
    </ligand>
</feature>
<feature type="binding site" evidence="2">
    <location>
        <begin position="159"/>
        <end position="160"/>
    </location>
    <ligand>
        <name>ATP</name>
        <dbReference type="ChEBI" id="CHEBI:30616"/>
    </ligand>
</feature>
<feature type="binding site" evidence="2">
    <location>
        <position position="201"/>
    </location>
    <ligand>
        <name>Zn(2+)</name>
        <dbReference type="ChEBI" id="CHEBI:29105"/>
    </ligand>
</feature>
<feature type="binding site" evidence="2">
    <location>
        <position position="204"/>
    </location>
    <ligand>
        <name>Zn(2+)</name>
        <dbReference type="ChEBI" id="CHEBI:29105"/>
    </ligand>
</feature>
<feature type="binding site" evidence="2">
    <location>
        <position position="279"/>
    </location>
    <ligand>
        <name>Zn(2+)</name>
        <dbReference type="ChEBI" id="CHEBI:29105"/>
    </ligand>
</feature>
<feature type="binding site" evidence="2">
    <location>
        <position position="282"/>
    </location>
    <ligand>
        <name>Zn(2+)</name>
        <dbReference type="ChEBI" id="CHEBI:29105"/>
    </ligand>
</feature>
<reference key="1">
    <citation type="journal article" date="2004" name="Nature">
        <title>Genome evolution in yeasts.</title>
        <authorList>
            <person name="Dujon B."/>
            <person name="Sherman D."/>
            <person name="Fischer G."/>
            <person name="Durrens P."/>
            <person name="Casaregola S."/>
            <person name="Lafontaine I."/>
            <person name="de Montigny J."/>
            <person name="Marck C."/>
            <person name="Neuveglise C."/>
            <person name="Talla E."/>
            <person name="Goffard N."/>
            <person name="Frangeul L."/>
            <person name="Aigle M."/>
            <person name="Anthouard V."/>
            <person name="Babour A."/>
            <person name="Barbe V."/>
            <person name="Barnay S."/>
            <person name="Blanchin S."/>
            <person name="Beckerich J.-M."/>
            <person name="Beyne E."/>
            <person name="Bleykasten C."/>
            <person name="Boisrame A."/>
            <person name="Boyer J."/>
            <person name="Cattolico L."/>
            <person name="Confanioleri F."/>
            <person name="de Daruvar A."/>
            <person name="Despons L."/>
            <person name="Fabre E."/>
            <person name="Fairhead C."/>
            <person name="Ferry-Dumazet H."/>
            <person name="Groppi A."/>
            <person name="Hantraye F."/>
            <person name="Hennequin C."/>
            <person name="Jauniaux N."/>
            <person name="Joyet P."/>
            <person name="Kachouri R."/>
            <person name="Kerrest A."/>
            <person name="Koszul R."/>
            <person name="Lemaire M."/>
            <person name="Lesur I."/>
            <person name="Ma L."/>
            <person name="Muller H."/>
            <person name="Nicaud J.-M."/>
            <person name="Nikolski M."/>
            <person name="Oztas S."/>
            <person name="Ozier-Kalogeropoulos O."/>
            <person name="Pellenz S."/>
            <person name="Potier S."/>
            <person name="Richard G.-F."/>
            <person name="Straub M.-L."/>
            <person name="Suleau A."/>
            <person name="Swennen D."/>
            <person name="Tekaia F."/>
            <person name="Wesolowski-Louvel M."/>
            <person name="Westhof E."/>
            <person name="Wirth B."/>
            <person name="Zeniou-Meyer M."/>
            <person name="Zivanovic Y."/>
            <person name="Bolotin-Fukuhara M."/>
            <person name="Thierry A."/>
            <person name="Bouchier C."/>
            <person name="Caudron B."/>
            <person name="Scarpelli C."/>
            <person name="Gaillardin C."/>
            <person name="Weissenbach J."/>
            <person name="Wincker P."/>
            <person name="Souciet J.-L."/>
        </authorList>
    </citation>
    <scope>NUCLEOTIDE SEQUENCE [LARGE SCALE GENOMIC DNA]</scope>
    <source>
        <strain>ATCC 2001 / BCRC 20586 / JCM 3761 / NBRC 0622 / NRRL Y-65 / CBS 138</strain>
    </source>
</reference>